<accession>Q46LE1</accession>
<gene>
    <name evidence="1" type="primary">lpxD</name>
    <name type="ordered locus">PMN2A_0195</name>
</gene>
<protein>
    <recommendedName>
        <fullName evidence="1">UDP-3-O-acylglucosamine N-acyltransferase</fullName>
        <ecNumber evidence="1">2.3.1.191</ecNumber>
    </recommendedName>
</protein>
<evidence type="ECO:0000255" key="1">
    <source>
        <dbReference type="HAMAP-Rule" id="MF_00523"/>
    </source>
</evidence>
<feature type="chain" id="PRO_0000264409" description="UDP-3-O-acylglucosamine N-acyltransferase">
    <location>
        <begin position="1"/>
        <end position="350"/>
    </location>
</feature>
<feature type="active site" description="Proton acceptor" evidence="1">
    <location>
        <position position="251"/>
    </location>
</feature>
<proteinExistence type="inferred from homology"/>
<reference key="1">
    <citation type="journal article" date="2007" name="PLoS Genet.">
        <title>Patterns and implications of gene gain and loss in the evolution of Prochlorococcus.</title>
        <authorList>
            <person name="Kettler G.C."/>
            <person name="Martiny A.C."/>
            <person name="Huang K."/>
            <person name="Zucker J."/>
            <person name="Coleman M.L."/>
            <person name="Rodrigue S."/>
            <person name="Chen F."/>
            <person name="Lapidus A."/>
            <person name="Ferriera S."/>
            <person name="Johnson J."/>
            <person name="Steglich C."/>
            <person name="Church G.M."/>
            <person name="Richardson P."/>
            <person name="Chisholm S.W."/>
        </authorList>
    </citation>
    <scope>NUCLEOTIDE SEQUENCE [LARGE SCALE GENOMIC DNA]</scope>
    <source>
        <strain>NATL2A</strain>
    </source>
</reference>
<name>LPXD_PROMT</name>
<organism>
    <name type="scientific">Prochlorococcus marinus (strain NATL2A)</name>
    <dbReference type="NCBI Taxonomy" id="59920"/>
    <lineage>
        <taxon>Bacteria</taxon>
        <taxon>Bacillati</taxon>
        <taxon>Cyanobacteriota</taxon>
        <taxon>Cyanophyceae</taxon>
        <taxon>Synechococcales</taxon>
        <taxon>Prochlorococcaceae</taxon>
        <taxon>Prochlorococcus</taxon>
    </lineage>
</organism>
<dbReference type="EC" id="2.3.1.191" evidence="1"/>
<dbReference type="EMBL" id="CP000095">
    <property type="protein sequence ID" value="AAZ57687.1"/>
    <property type="molecule type" value="Genomic_DNA"/>
</dbReference>
<dbReference type="RefSeq" id="WP_011293729.1">
    <property type="nucleotide sequence ID" value="NC_007335.2"/>
</dbReference>
<dbReference type="SMR" id="Q46LE1"/>
<dbReference type="STRING" id="59920.PMN2A_0195"/>
<dbReference type="KEGG" id="pmn:PMN2A_0195"/>
<dbReference type="HOGENOM" id="CLU_049865_0_0_3"/>
<dbReference type="OrthoDB" id="9784739at2"/>
<dbReference type="PhylomeDB" id="Q46LE1"/>
<dbReference type="UniPathway" id="UPA00973"/>
<dbReference type="Proteomes" id="UP000002535">
    <property type="component" value="Chromosome"/>
</dbReference>
<dbReference type="GO" id="GO:0031470">
    <property type="term" value="C:carboxysome"/>
    <property type="evidence" value="ECO:0007669"/>
    <property type="project" value="UniProtKB-ARBA"/>
</dbReference>
<dbReference type="GO" id="GO:0016020">
    <property type="term" value="C:membrane"/>
    <property type="evidence" value="ECO:0007669"/>
    <property type="project" value="GOC"/>
</dbReference>
<dbReference type="GO" id="GO:0016410">
    <property type="term" value="F:N-acyltransferase activity"/>
    <property type="evidence" value="ECO:0007669"/>
    <property type="project" value="InterPro"/>
</dbReference>
<dbReference type="GO" id="GO:0043886">
    <property type="term" value="F:structural constituent of carboxysome shell"/>
    <property type="evidence" value="ECO:0007669"/>
    <property type="project" value="UniProtKB-ARBA"/>
</dbReference>
<dbReference type="GO" id="GO:0009245">
    <property type="term" value="P:lipid A biosynthetic process"/>
    <property type="evidence" value="ECO:0007669"/>
    <property type="project" value="UniProtKB-UniRule"/>
</dbReference>
<dbReference type="CDD" id="cd03352">
    <property type="entry name" value="LbH_LpxD"/>
    <property type="match status" value="1"/>
</dbReference>
<dbReference type="Gene3D" id="2.160.10.10">
    <property type="entry name" value="Hexapeptide repeat proteins"/>
    <property type="match status" value="1"/>
</dbReference>
<dbReference type="Gene3D" id="3.40.1390.10">
    <property type="entry name" value="MurE/MurF, N-terminal domain"/>
    <property type="match status" value="1"/>
</dbReference>
<dbReference type="HAMAP" id="MF_00523">
    <property type="entry name" value="LpxD"/>
    <property type="match status" value="1"/>
</dbReference>
<dbReference type="InterPro" id="IPR001451">
    <property type="entry name" value="Hexapep"/>
</dbReference>
<dbReference type="InterPro" id="IPR018357">
    <property type="entry name" value="Hexapep_transf_CS"/>
</dbReference>
<dbReference type="InterPro" id="IPR007691">
    <property type="entry name" value="LpxD"/>
</dbReference>
<dbReference type="InterPro" id="IPR011004">
    <property type="entry name" value="Trimer_LpxA-like_sf"/>
</dbReference>
<dbReference type="InterPro" id="IPR020573">
    <property type="entry name" value="UDP_GlcNAc_AcTrfase_non-rep"/>
</dbReference>
<dbReference type="NCBIfam" id="TIGR01853">
    <property type="entry name" value="lipid_A_lpxD"/>
    <property type="match status" value="1"/>
</dbReference>
<dbReference type="NCBIfam" id="NF002060">
    <property type="entry name" value="PRK00892.1"/>
    <property type="match status" value="1"/>
</dbReference>
<dbReference type="PANTHER" id="PTHR43378">
    <property type="entry name" value="UDP-3-O-ACYLGLUCOSAMINE N-ACYLTRANSFERASE"/>
    <property type="match status" value="1"/>
</dbReference>
<dbReference type="PANTHER" id="PTHR43378:SF2">
    <property type="entry name" value="UDP-3-O-ACYLGLUCOSAMINE N-ACYLTRANSFERASE 1, MITOCHONDRIAL-RELATED"/>
    <property type="match status" value="1"/>
</dbReference>
<dbReference type="Pfam" id="PF00132">
    <property type="entry name" value="Hexapep"/>
    <property type="match status" value="2"/>
</dbReference>
<dbReference type="Pfam" id="PF04613">
    <property type="entry name" value="LpxD"/>
    <property type="match status" value="1"/>
</dbReference>
<dbReference type="SUPFAM" id="SSF51161">
    <property type="entry name" value="Trimeric LpxA-like enzymes"/>
    <property type="match status" value="1"/>
</dbReference>
<dbReference type="PROSITE" id="PS00101">
    <property type="entry name" value="HEXAPEP_TRANSFERASES"/>
    <property type="match status" value="1"/>
</dbReference>
<keyword id="KW-0012">Acyltransferase</keyword>
<keyword id="KW-0441">Lipid A biosynthesis</keyword>
<keyword id="KW-0444">Lipid biosynthesis</keyword>
<keyword id="KW-0443">Lipid metabolism</keyword>
<keyword id="KW-1185">Reference proteome</keyword>
<keyword id="KW-0677">Repeat</keyword>
<keyword id="KW-0808">Transferase</keyword>
<sequence>MQFIEIVEKLKKGQSGVVDFKIKNNPVILTAASLENAKDNDISFLDNNSPLNLRNLIETSKASALLLPANDTYIIEIAKKISVDWIILKEPKIAFAETLEFLYPSNVESEGIHKSAVIGQNVKIGLGVSIGANAYIGDNTEIGAGTIIHAGVVLYRNVRIGSKNLIHANSVIHSGSKLGDKCVINANAVIGGEGFGFVPTSNGWKKMPQVGIVILKNKVEVGSGSTIDRPSVGETIIGEDTKIDNLVQIGHGVTTGKGCAMAAQVGIAGGAQIGDGVILAGQVGISNRVKIGDGVIASSKTGIVSNIEAGTVVSGFPAIPNKLWLRCSANFKKLPEIAKAIRQLDRKKSR</sequence>
<comment type="function">
    <text evidence="1">Catalyzes the N-acylation of UDP-3-O-acylglucosamine using 3-hydroxyacyl-ACP as the acyl donor. Is involved in the biosynthesis of lipid A, a phosphorylated glycolipid that anchors the lipopolysaccharide to the outer membrane of the cell.</text>
</comment>
<comment type="catalytic activity">
    <reaction evidence="1">
        <text>a UDP-3-O-[(3R)-3-hydroxyacyl]-alpha-D-glucosamine + a (3R)-hydroxyacyl-[ACP] = a UDP-2-N,3-O-bis[(3R)-3-hydroxyacyl]-alpha-D-glucosamine + holo-[ACP] + H(+)</text>
        <dbReference type="Rhea" id="RHEA:53836"/>
        <dbReference type="Rhea" id="RHEA-COMP:9685"/>
        <dbReference type="Rhea" id="RHEA-COMP:9945"/>
        <dbReference type="ChEBI" id="CHEBI:15378"/>
        <dbReference type="ChEBI" id="CHEBI:64479"/>
        <dbReference type="ChEBI" id="CHEBI:78827"/>
        <dbReference type="ChEBI" id="CHEBI:137740"/>
        <dbReference type="ChEBI" id="CHEBI:137748"/>
        <dbReference type="EC" id="2.3.1.191"/>
    </reaction>
</comment>
<comment type="pathway">
    <text evidence="1">Bacterial outer membrane biogenesis; LPS lipid A biosynthesis.</text>
</comment>
<comment type="subunit">
    <text evidence="1">Homotrimer.</text>
</comment>
<comment type="similarity">
    <text evidence="1">Belongs to the transferase hexapeptide repeat family. LpxD subfamily.</text>
</comment>